<gene>
    <name type="primary">Tmprss13</name>
    <name type="synonym">Msp</name>
</gene>
<sequence length="543" mass="59806">MDRGSHRNSSPARTPPQASPARTSPARAPPQASPARTPPQASPARTPPQASPARAPPPQASPARASPARAPPSRSSSGRSSSARSASTTSSPTRVYLVRATPVGAVPIRASPARSAPATRATRESPGLSFPKFSWQETQRQLPLIGCVILLISLVISLILLFYFWRGHTGIKYKEPLESCPIHAVRCDGVVDCKMKSDELGCVRFDWDKSLLKVYSGSSGEWLPVCSSSWNDTDSKRTCQQLGFDSAYRTTEVAHRDITSSFLLSEYNTTIQESLYRSQCSSRRYVSLQCSHCGLRAMTGRIVGGALTSESKWPWQVSLHFGTTHICGGTLIDAQWVLTAAHCFFVTREKLLEGWKVYAGTSNLHQLPEAASISQIIINGNYTDEQDDYDIALIRLSKPLTLSAHIHPACLPMHGQTFGLNETCWITGFGKTKETDEKTSPFLREVQVNLIDFKKCNDYLVYDSYLTPRMMCAGDLRGGRDSCQGDSGGPLVCEQNNRWYLAGVTSWGTGCGQKNKPGVYTKVTEVLPWIYRKMESEVRFRKS</sequence>
<proteinExistence type="evidence at transcript level"/>
<dbReference type="EC" id="3.4.21.-" evidence="2"/>
<dbReference type="EMBL" id="BC010843">
    <property type="protein sequence ID" value="AAH10843.1"/>
    <property type="molecule type" value="mRNA"/>
</dbReference>
<dbReference type="EMBL" id="BC042878">
    <property type="protein sequence ID" value="AAH42878.1"/>
    <property type="molecule type" value="mRNA"/>
</dbReference>
<dbReference type="EMBL" id="BC085323">
    <property type="protein sequence ID" value="AAH85323.1"/>
    <property type="molecule type" value="mRNA"/>
</dbReference>
<dbReference type="SMR" id="Q5U405"/>
<dbReference type="FunCoup" id="Q5U405">
    <property type="interactions" value="42"/>
</dbReference>
<dbReference type="STRING" id="10090.ENSMUSP00000034597"/>
<dbReference type="MEROPS" id="S01.087"/>
<dbReference type="GlyCosmos" id="Q5U405">
    <property type="glycosylation" value="4 sites, No reported glycans"/>
</dbReference>
<dbReference type="GlyGen" id="Q5U405">
    <property type="glycosylation" value="4 sites"/>
</dbReference>
<dbReference type="iPTMnet" id="Q5U405"/>
<dbReference type="PhosphoSitePlus" id="Q5U405"/>
<dbReference type="jPOST" id="Q5U405"/>
<dbReference type="PaxDb" id="10090-ENSMUSP00000034597"/>
<dbReference type="ProteomicsDB" id="259269"/>
<dbReference type="AGR" id="MGI:2682935"/>
<dbReference type="MGI" id="MGI:2682935">
    <property type="gene designation" value="Tmprss13"/>
</dbReference>
<dbReference type="eggNOG" id="KOG3627">
    <property type="taxonomic scope" value="Eukaryota"/>
</dbReference>
<dbReference type="InParanoid" id="Q5U405"/>
<dbReference type="PhylomeDB" id="Q5U405"/>
<dbReference type="ChiTaRS" id="Tmprss13">
    <property type="organism name" value="mouse"/>
</dbReference>
<dbReference type="PRO" id="PR:Q5U405"/>
<dbReference type="Proteomes" id="UP000000589">
    <property type="component" value="Unplaced"/>
</dbReference>
<dbReference type="RNAct" id="Q5U405">
    <property type="molecule type" value="protein"/>
</dbReference>
<dbReference type="GO" id="GO:0005737">
    <property type="term" value="C:cytoplasm"/>
    <property type="evidence" value="ECO:0007669"/>
    <property type="project" value="UniProtKB-SubCell"/>
</dbReference>
<dbReference type="GO" id="GO:0005576">
    <property type="term" value="C:extracellular region"/>
    <property type="evidence" value="ECO:0007669"/>
    <property type="project" value="UniProtKB-SubCell"/>
</dbReference>
<dbReference type="GO" id="GO:0005886">
    <property type="term" value="C:plasma membrane"/>
    <property type="evidence" value="ECO:0007669"/>
    <property type="project" value="UniProtKB-SubCell"/>
</dbReference>
<dbReference type="GO" id="GO:0004252">
    <property type="term" value="F:serine-type endopeptidase activity"/>
    <property type="evidence" value="ECO:0007669"/>
    <property type="project" value="InterPro"/>
</dbReference>
<dbReference type="GO" id="GO:0061436">
    <property type="term" value="P:establishment of skin barrier"/>
    <property type="evidence" value="ECO:0000315"/>
    <property type="project" value="MGI"/>
</dbReference>
<dbReference type="GO" id="GO:0006508">
    <property type="term" value="P:proteolysis"/>
    <property type="evidence" value="ECO:0007669"/>
    <property type="project" value="UniProtKB-KW"/>
</dbReference>
<dbReference type="CDD" id="cd00112">
    <property type="entry name" value="LDLa"/>
    <property type="match status" value="1"/>
</dbReference>
<dbReference type="CDD" id="cd00190">
    <property type="entry name" value="Tryp_SPc"/>
    <property type="match status" value="1"/>
</dbReference>
<dbReference type="FunFam" id="2.40.10.10:FF:000003">
    <property type="entry name" value="Transmembrane serine protease 3"/>
    <property type="match status" value="1"/>
</dbReference>
<dbReference type="Gene3D" id="3.10.250.10">
    <property type="entry name" value="SRCR-like domain"/>
    <property type="match status" value="1"/>
</dbReference>
<dbReference type="Gene3D" id="2.40.10.10">
    <property type="entry name" value="Trypsin-like serine proteases"/>
    <property type="match status" value="1"/>
</dbReference>
<dbReference type="InterPro" id="IPR002172">
    <property type="entry name" value="LDrepeatLR_classA_rpt"/>
</dbReference>
<dbReference type="InterPro" id="IPR009003">
    <property type="entry name" value="Peptidase_S1_PA"/>
</dbReference>
<dbReference type="InterPro" id="IPR043504">
    <property type="entry name" value="Peptidase_S1_PA_chymotrypsin"/>
</dbReference>
<dbReference type="InterPro" id="IPR001314">
    <property type="entry name" value="Peptidase_S1A"/>
</dbReference>
<dbReference type="InterPro" id="IPR017327">
    <property type="entry name" value="Peptidase_S1A_TMPRSS13"/>
</dbReference>
<dbReference type="InterPro" id="IPR001190">
    <property type="entry name" value="SRCR"/>
</dbReference>
<dbReference type="InterPro" id="IPR036772">
    <property type="entry name" value="SRCR-like_dom_sf"/>
</dbReference>
<dbReference type="InterPro" id="IPR001254">
    <property type="entry name" value="Trypsin_dom"/>
</dbReference>
<dbReference type="InterPro" id="IPR018114">
    <property type="entry name" value="TRYPSIN_HIS"/>
</dbReference>
<dbReference type="InterPro" id="IPR033116">
    <property type="entry name" value="TRYPSIN_SER"/>
</dbReference>
<dbReference type="PANTHER" id="PTHR24252">
    <property type="entry name" value="ACROSIN-RELATED"/>
    <property type="match status" value="1"/>
</dbReference>
<dbReference type="PANTHER" id="PTHR24252:SF27">
    <property type="entry name" value="TRANSMEMBRANE PROTEASE SERINE 3-LIKE"/>
    <property type="match status" value="1"/>
</dbReference>
<dbReference type="Pfam" id="PF15494">
    <property type="entry name" value="SRCR_2"/>
    <property type="match status" value="1"/>
</dbReference>
<dbReference type="Pfam" id="PF00089">
    <property type="entry name" value="Trypsin"/>
    <property type="match status" value="1"/>
</dbReference>
<dbReference type="PIRSF" id="PIRSF037935">
    <property type="entry name" value="TMPRSS13"/>
    <property type="match status" value="1"/>
</dbReference>
<dbReference type="PRINTS" id="PR00722">
    <property type="entry name" value="CHYMOTRYPSIN"/>
</dbReference>
<dbReference type="SMART" id="SM00202">
    <property type="entry name" value="SR"/>
    <property type="match status" value="1"/>
</dbReference>
<dbReference type="SMART" id="SM00020">
    <property type="entry name" value="Tryp_SPc"/>
    <property type="match status" value="1"/>
</dbReference>
<dbReference type="SUPFAM" id="SSF56487">
    <property type="entry name" value="SRCR-like"/>
    <property type="match status" value="1"/>
</dbReference>
<dbReference type="SUPFAM" id="SSF50494">
    <property type="entry name" value="Trypsin-like serine proteases"/>
    <property type="match status" value="1"/>
</dbReference>
<dbReference type="PROSITE" id="PS50287">
    <property type="entry name" value="SRCR_2"/>
    <property type="match status" value="1"/>
</dbReference>
<dbReference type="PROSITE" id="PS50240">
    <property type="entry name" value="TRYPSIN_DOM"/>
    <property type="match status" value="1"/>
</dbReference>
<dbReference type="PROSITE" id="PS00134">
    <property type="entry name" value="TRYPSIN_HIS"/>
    <property type="match status" value="1"/>
</dbReference>
<dbReference type="PROSITE" id="PS00135">
    <property type="entry name" value="TRYPSIN_SER"/>
    <property type="match status" value="1"/>
</dbReference>
<name>TMPSD_MOUSE</name>
<organism>
    <name type="scientific">Mus musculus</name>
    <name type="common">Mouse</name>
    <dbReference type="NCBI Taxonomy" id="10090"/>
    <lineage>
        <taxon>Eukaryota</taxon>
        <taxon>Metazoa</taxon>
        <taxon>Chordata</taxon>
        <taxon>Craniata</taxon>
        <taxon>Vertebrata</taxon>
        <taxon>Euteleostomi</taxon>
        <taxon>Mammalia</taxon>
        <taxon>Eutheria</taxon>
        <taxon>Euarchontoglires</taxon>
        <taxon>Glires</taxon>
        <taxon>Rodentia</taxon>
        <taxon>Myomorpha</taxon>
        <taxon>Muroidea</taxon>
        <taxon>Muridae</taxon>
        <taxon>Murinae</taxon>
        <taxon>Mus</taxon>
        <taxon>Mus</taxon>
    </lineage>
</organism>
<feature type="chain" id="PRO_0000088699" description="Transmembrane protease serine 13">
    <location>
        <begin position="1"/>
        <end position="543"/>
    </location>
</feature>
<feature type="topological domain" description="Cytoplasmic" evidence="3">
    <location>
        <begin position="1"/>
        <end position="143"/>
    </location>
</feature>
<feature type="transmembrane region" description="Helical; Signal-anchor for type II membrane protein" evidence="3">
    <location>
        <begin position="144"/>
        <end position="164"/>
    </location>
</feature>
<feature type="topological domain" description="Extracellular" evidence="3">
    <location>
        <begin position="165"/>
        <end position="543"/>
    </location>
</feature>
<feature type="repeat" description="1-1">
    <location>
        <begin position="14"/>
        <end position="17"/>
    </location>
</feature>
<feature type="repeat" description="2-1">
    <location>
        <begin position="18"/>
        <end position="22"/>
    </location>
</feature>
<feature type="repeat" description="2-2; approximate">
    <location>
        <begin position="23"/>
        <end position="27"/>
    </location>
</feature>
<feature type="repeat" description="1-2; approximate">
    <location>
        <begin position="28"/>
        <end position="31"/>
    </location>
</feature>
<feature type="repeat" description="2-3">
    <location>
        <begin position="32"/>
        <end position="36"/>
    </location>
</feature>
<feature type="repeat" description="1-3">
    <location>
        <begin position="37"/>
        <end position="40"/>
    </location>
</feature>
<feature type="repeat" description="2-4">
    <location>
        <begin position="41"/>
        <end position="45"/>
    </location>
</feature>
<feature type="repeat" description="1-4">
    <location>
        <begin position="46"/>
        <end position="49"/>
    </location>
</feature>
<feature type="repeat" description="2-5">
    <location>
        <begin position="50"/>
        <end position="54"/>
    </location>
</feature>
<feature type="repeat" description="2-6; approximate">
    <location>
        <begin position="55"/>
        <end position="59"/>
    </location>
</feature>
<feature type="repeat" description="2-7">
    <location>
        <begin position="60"/>
        <end position="64"/>
    </location>
</feature>
<feature type="repeat" description="2-8">
    <location>
        <begin position="65"/>
        <end position="69"/>
    </location>
</feature>
<feature type="domain" description="LDL-receptor class A">
    <location>
        <begin position="180"/>
        <end position="202"/>
    </location>
</feature>
<feature type="domain" description="SRCR" evidence="4">
    <location>
        <begin position="199"/>
        <end position="301"/>
    </location>
</feature>
<feature type="domain" description="Peptidase S1" evidence="5">
    <location>
        <begin position="302"/>
        <end position="535"/>
    </location>
</feature>
<feature type="region of interest" description="Disordered" evidence="6">
    <location>
        <begin position="1"/>
        <end position="96"/>
    </location>
</feature>
<feature type="region of interest" description="4 X 4 AA repeats of T-P-P-Q">
    <location>
        <begin position="14"/>
        <end position="49"/>
    </location>
</feature>
<feature type="region of interest" description="8 X 5 AA repeats of A-S-P-A-R">
    <location>
        <begin position="18"/>
        <end position="69"/>
    </location>
</feature>
<feature type="region of interest" description="Disordered" evidence="6">
    <location>
        <begin position="109"/>
        <end position="129"/>
    </location>
</feature>
<feature type="compositionally biased region" description="Pro residues" evidence="6">
    <location>
        <begin position="27"/>
        <end position="60"/>
    </location>
</feature>
<feature type="compositionally biased region" description="Low complexity" evidence="6">
    <location>
        <begin position="61"/>
        <end position="94"/>
    </location>
</feature>
<feature type="compositionally biased region" description="Low complexity" evidence="6">
    <location>
        <begin position="109"/>
        <end position="120"/>
    </location>
</feature>
<feature type="active site" description="Charge relay system" evidence="1">
    <location>
        <position position="342"/>
    </location>
</feature>
<feature type="active site" description="Charge relay system" evidence="1">
    <location>
        <position position="390"/>
    </location>
</feature>
<feature type="active site" description="Charge relay system" evidence="2">
    <location>
        <position position="487"/>
    </location>
</feature>
<feature type="site" description="Cleavage; by autolysis; required for cell surface localization and secretion" evidence="2">
    <location>
        <begin position="204"/>
        <end position="205"/>
    </location>
</feature>
<feature type="site" description="Required for autocleavage and PRSS8 cleavage" evidence="2">
    <location>
        <position position="301"/>
    </location>
</feature>
<feature type="glycosylation site" description="N-linked (GlcNAc...) asparagine" evidence="3">
    <location>
        <position position="231"/>
    </location>
</feature>
<feature type="glycosylation site" description="N-linked (GlcNAc...) asparagine" evidence="3">
    <location>
        <position position="268"/>
    </location>
</feature>
<feature type="glycosylation site" description="N-linked (GlcNAc...) asparagine" evidence="3">
    <location>
        <position position="381"/>
    </location>
</feature>
<feature type="glycosylation site" description="N-linked (GlcNAc...) asparagine" evidence="3">
    <location>
        <position position="421"/>
    </location>
</feature>
<feature type="disulfide bond" evidence="1">
    <location>
        <begin position="226"/>
        <end position="290"/>
    </location>
</feature>
<feature type="disulfide bond" evidence="1">
    <location>
        <begin position="239"/>
        <end position="293"/>
    </location>
</feature>
<feature type="disulfide bond" evidence="1">
    <location>
        <begin position="327"/>
        <end position="343"/>
    </location>
</feature>
<feature type="disulfide bond" evidence="1">
    <location>
        <begin position="424"/>
        <end position="493"/>
    </location>
</feature>
<feature type="disulfide bond" evidence="1">
    <location>
        <begin position="456"/>
        <end position="472"/>
    </location>
</feature>
<feature type="disulfide bond" evidence="1">
    <location>
        <begin position="483"/>
        <end position="511"/>
    </location>
</feature>
<feature type="sequence conflict" description="In Ref. 1; AAH42878." evidence="8" ref="1">
    <original>S</original>
    <variation>P</variation>
    <location>
        <position position="281"/>
    </location>
</feature>
<feature type="sequence conflict" description="In Ref. 1; AAH85323." evidence="8" ref="1">
    <original>D</original>
    <variation>G</variation>
    <location>
        <position position="475"/>
    </location>
</feature>
<feature type="sequence conflict" description="In Ref. 1; AAH85323." evidence="8" ref="1">
    <original>I</original>
    <variation>T</variation>
    <location>
        <position position="530"/>
    </location>
</feature>
<protein>
    <recommendedName>
        <fullName>Transmembrane protease serine 13</fullName>
        <ecNumber evidence="2">3.4.21.-</ecNumber>
    </recommendedName>
    <alternativeName>
        <fullName>Membrane-type mosaic serine protease</fullName>
        <shortName>Mosaic serine protease</shortName>
    </alternativeName>
</protein>
<evidence type="ECO:0000250" key="1"/>
<evidence type="ECO:0000250" key="2">
    <source>
        <dbReference type="UniProtKB" id="Q9BYE2"/>
    </source>
</evidence>
<evidence type="ECO:0000255" key="3"/>
<evidence type="ECO:0000255" key="4">
    <source>
        <dbReference type="PROSITE-ProRule" id="PRU00196"/>
    </source>
</evidence>
<evidence type="ECO:0000255" key="5">
    <source>
        <dbReference type="PROSITE-ProRule" id="PRU00274"/>
    </source>
</evidence>
<evidence type="ECO:0000256" key="6">
    <source>
        <dbReference type="SAM" id="MobiDB-lite"/>
    </source>
</evidence>
<evidence type="ECO:0000269" key="7">
    <source>
    </source>
</evidence>
<evidence type="ECO:0000305" key="8"/>
<keyword id="KW-1003">Cell membrane</keyword>
<keyword id="KW-0963">Cytoplasm</keyword>
<keyword id="KW-1015">Disulfide bond</keyword>
<keyword id="KW-0325">Glycoprotein</keyword>
<keyword id="KW-0378">Hydrolase</keyword>
<keyword id="KW-0472">Membrane</keyword>
<keyword id="KW-0645">Protease</keyword>
<keyword id="KW-1185">Reference proteome</keyword>
<keyword id="KW-0677">Repeat</keyword>
<keyword id="KW-0964">Secreted</keyword>
<keyword id="KW-0720">Serine protease</keyword>
<keyword id="KW-0735">Signal-anchor</keyword>
<keyword id="KW-0812">Transmembrane</keyword>
<keyword id="KW-1133">Transmembrane helix</keyword>
<comment type="function">
    <text evidence="2 7">Serine protease (By similarity). Cleaves the proform of PRSS8/prostasin to form the active protein (By similarity). Cleaves the proform of HGF to form the active protein which promotes MAPK signaling (By similarity). Promotes the formation of the stratum corneum and subsequently the epidermal barrier in embryos (PubMed:24832573).</text>
</comment>
<comment type="activity regulation">
    <text evidence="2">Cleavage of HGF is inhibited by SPINT1/HAI-1 via the BPTI/Kunitz inhibitor 1 domain.</text>
</comment>
<comment type="subunit">
    <text evidence="2">Interacts with SPINT1/HAI-1; the interaction promotes the phosphorylation and cell membrane localization of TMPRSS13 (By similarity). Interacts with SPINT2/HAI-2; the interaction promotes the phosphorylation and cell membrane localization of TMPRSS13 (By similarity).</text>
</comment>
<comment type="subcellular location">
    <subcellularLocation>
        <location evidence="2">Cell membrane</location>
        <topology evidence="3">Single-pass type II membrane protein</topology>
    </subcellularLocation>
    <subcellularLocation>
        <location evidence="2">Secreted</location>
    </subcellularLocation>
    <subcellularLocation>
        <location evidence="2">Cytoplasm</location>
    </subcellularLocation>
    <text evidence="2">The non-phosphorylated, inactive full length protein localizes intracellularly (By similarity). N-glycosylation and phosphorylation is required for trafficking to the cell surface (By similarity). Interaction with SPINT1/HAI-1 and SPINT2/HAI-2 facilitate its translocation to the cell surface (By similarity). Proteolytic cleavage is required for secretion (By similarity).</text>
</comment>
<comment type="tissue specificity">
    <text evidence="7">Expressed in the suprabasal squamous epithelium of the epidermis, hair follicles, oral epithelium, cornea, upper digestive tract, transitional epithelium of the bladder, prostate, heart, intestine, kidney and thymus.</text>
</comment>
<comment type="developmental stage">
    <text evidence="7">Expressed from 14.5 dpc in the spinous and granular/transitional layer of the epidermis of the face, developing ear and limbs (PubMed:24832573). Expression is more abundant at 15.5 dpc and at 16.5 dpc is present in the entire developing epidermis (PubMed:24832573).</text>
</comment>
<comment type="PTM">
    <text evidence="2">The inactive zymogen is post-translationally modified and then trafficked to the cell surface, whereby it undergoes autocatalytic cleavage resulting in an activated form that is released extracellularly.</text>
</comment>
<comment type="PTM">
    <text evidence="2">Phosphorylation is required for localization at the cell surface (By similarity). Phosphorylation increases following inhibition of protease activity by SPINT2/HAI-2 (By similarity).</text>
</comment>
<comment type="disruption phenotype">
    <text evidence="7">Increases trans-epidermal fluid loss and shows abnormally developed stratum corneum of the epidermis with fewer and smaller intercorneocyte lacunae at birth which results in a thinner epidermis, however the thickness of the living layer of the epidermis shows no change (PubMed:24832573). At birth mice have 30% shorter whiskers, this difference in length normalizes by adulthood (PubMed:24832573).</text>
</comment>
<comment type="similarity">
    <text evidence="5">Belongs to the peptidase S1 family.</text>
</comment>
<reference key="1">
    <citation type="journal article" date="2004" name="Genome Res.">
        <title>The status, quality, and expansion of the NIH full-length cDNA project: the Mammalian Gene Collection (MGC).</title>
        <authorList>
            <consortium name="The MGC Project Team"/>
        </authorList>
    </citation>
    <scope>NUCLEOTIDE SEQUENCE [LARGE SCALE MRNA]</scope>
    <source>
        <strain>B5/EGFP</strain>
        <strain>FVB/N</strain>
        <tissue>Mammary tumor</tissue>
        <tissue>Trophoblast stem cell</tissue>
    </source>
</reference>
<reference key="2">
    <citation type="journal article" date="2014" name="Biochem. J.">
        <title>TMPRSS13 deficiency impairs stratum corneum formation and epidermal barrier acquisition.</title>
        <authorList>
            <person name="Madsen D.H."/>
            <person name="Szabo R."/>
            <person name="Molinolo A.A."/>
            <person name="Bugge T.H."/>
        </authorList>
    </citation>
    <scope>FUNCTION</scope>
    <scope>TISSUE SPECIFICITY</scope>
    <scope>DEVELOPMENTAL STAGE</scope>
    <scope>DISRUPTION PHENOTYPE</scope>
</reference>
<accession>Q5U405</accession>
<accession>Q8CFE0</accession>
<accession>Q91VQ8</accession>